<name>IFT25_HUMAN</name>
<accession>Q9Y547</accession>
<accession>A6NG57</accession>
<accession>D3DQ45</accession>
<accession>Q9Y684</accession>
<dbReference type="EMBL" id="AF416725">
    <property type="protein sequence ID" value="AAQ03618.1"/>
    <property type="molecule type" value="mRNA"/>
</dbReference>
<dbReference type="EMBL" id="AF417114">
    <property type="protein sequence ID" value="AAQ03994.1"/>
    <property type="molecule type" value="mRNA"/>
</dbReference>
<dbReference type="EMBL" id="AF100747">
    <property type="protein sequence ID" value="AAD43011.1"/>
    <property type="status" value="ALT_FRAME"/>
    <property type="molecule type" value="mRNA"/>
</dbReference>
<dbReference type="EMBL" id="AL031427">
    <property type="status" value="NOT_ANNOTATED_CDS"/>
    <property type="molecule type" value="Genomic_DNA"/>
</dbReference>
<dbReference type="EMBL" id="CH471059">
    <property type="protein sequence ID" value="EAX06717.1"/>
    <property type="molecule type" value="Genomic_DNA"/>
</dbReference>
<dbReference type="EMBL" id="CH471059">
    <property type="protein sequence ID" value="EAX06719.1"/>
    <property type="molecule type" value="Genomic_DNA"/>
</dbReference>
<dbReference type="EMBL" id="BC005245">
    <property type="protein sequence ID" value="AAH05245.1"/>
    <property type="molecule type" value="mRNA"/>
</dbReference>
<dbReference type="CCDS" id="CCDS41341.1"/>
<dbReference type="RefSeq" id="NP_001303864.1">
    <property type="nucleotide sequence ID" value="NM_001316935.2"/>
</dbReference>
<dbReference type="RefSeq" id="NP_057210.2">
    <property type="nucleotide sequence ID" value="NM_016126.4"/>
</dbReference>
<dbReference type="PDB" id="1TVG">
    <property type="method" value="X-ray"/>
    <property type="resolution" value="1.60 A"/>
    <property type="chains" value="A=1-143"/>
</dbReference>
<dbReference type="PDB" id="1XPW">
    <property type="method" value="NMR"/>
    <property type="chains" value="A=1-144"/>
</dbReference>
<dbReference type="PDBsum" id="1TVG"/>
<dbReference type="PDBsum" id="1XPW"/>
<dbReference type="BMRB" id="Q9Y547"/>
<dbReference type="SMR" id="Q9Y547"/>
<dbReference type="BioGRID" id="119671">
    <property type="interactions" value="31"/>
</dbReference>
<dbReference type="ComplexPortal" id="CPX-5022">
    <property type="entry name" value="Intraflagellar transport complex B"/>
</dbReference>
<dbReference type="CORUM" id="Q9Y547"/>
<dbReference type="FunCoup" id="Q9Y547">
    <property type="interactions" value="245"/>
</dbReference>
<dbReference type="IntAct" id="Q9Y547">
    <property type="interactions" value="26"/>
</dbReference>
<dbReference type="MINT" id="Q9Y547"/>
<dbReference type="STRING" id="9606.ENSP00000194214"/>
<dbReference type="iPTMnet" id="Q9Y547"/>
<dbReference type="PhosphoSitePlus" id="Q9Y547"/>
<dbReference type="BioMuta" id="HSPB11"/>
<dbReference type="DMDM" id="67460979"/>
<dbReference type="jPOST" id="Q9Y547"/>
<dbReference type="MassIVE" id="Q9Y547"/>
<dbReference type="PaxDb" id="9606-ENSP00000194214"/>
<dbReference type="PeptideAtlas" id="Q9Y547"/>
<dbReference type="ProteomicsDB" id="86288"/>
<dbReference type="Pumba" id="Q9Y547"/>
<dbReference type="Antibodypedia" id="33127">
    <property type="antibodies" value="83 antibodies from 22 providers"/>
</dbReference>
<dbReference type="DNASU" id="51668"/>
<dbReference type="Ensembl" id="ENST00000194214.10">
    <property type="protein sequence ID" value="ENSP00000194214.5"/>
    <property type="gene ID" value="ENSG00000081870.12"/>
</dbReference>
<dbReference type="GeneID" id="51668"/>
<dbReference type="KEGG" id="hsa:51668"/>
<dbReference type="MANE-Select" id="ENST00000194214.10">
    <property type="protein sequence ID" value="ENSP00000194214.5"/>
    <property type="RefSeq nucleotide sequence ID" value="NM_016126.4"/>
    <property type="RefSeq protein sequence ID" value="NP_057210.2"/>
</dbReference>
<dbReference type="UCSC" id="uc001cwh.4">
    <property type="organism name" value="human"/>
</dbReference>
<dbReference type="AGR" id="HGNC:25019"/>
<dbReference type="CTD" id="51668"/>
<dbReference type="DisGeNET" id="51668"/>
<dbReference type="GeneCards" id="IFT25"/>
<dbReference type="HGNC" id="HGNC:25019">
    <property type="gene designation" value="IFT25"/>
</dbReference>
<dbReference type="HPA" id="ENSG00000081870">
    <property type="expression patterns" value="Low tissue specificity"/>
</dbReference>
<dbReference type="MIM" id="620841">
    <property type="type" value="gene"/>
</dbReference>
<dbReference type="neXtProt" id="NX_Q9Y547"/>
<dbReference type="OpenTargets" id="ENSG00000081870"/>
<dbReference type="PharmGKB" id="PA162391751"/>
<dbReference type="VEuPathDB" id="HostDB:ENSG00000081870"/>
<dbReference type="eggNOG" id="KOG3437">
    <property type="taxonomic scope" value="Eukaryota"/>
</dbReference>
<dbReference type="GeneTree" id="ENSGT00390000012620"/>
<dbReference type="HOGENOM" id="CLU_132151_0_0_1"/>
<dbReference type="InParanoid" id="Q9Y547"/>
<dbReference type="OMA" id="MWTRNAK"/>
<dbReference type="PAN-GO" id="Q9Y547">
    <property type="GO annotations" value="3 GO annotations based on evolutionary models"/>
</dbReference>
<dbReference type="PhylomeDB" id="Q9Y547"/>
<dbReference type="TreeFam" id="TF336031"/>
<dbReference type="PathwayCommons" id="Q9Y547"/>
<dbReference type="Reactome" id="R-HSA-5620924">
    <property type="pathway name" value="Intraflagellar transport"/>
</dbReference>
<dbReference type="SignaLink" id="Q9Y547"/>
<dbReference type="BioGRID-ORCS" id="51668">
    <property type="hits" value="10 hits in 1108 CRISPR screens"/>
</dbReference>
<dbReference type="ChiTaRS" id="HSPB11">
    <property type="organism name" value="human"/>
</dbReference>
<dbReference type="EvolutionaryTrace" id="Q9Y547"/>
<dbReference type="GenomeRNAi" id="51668"/>
<dbReference type="Pharos" id="Q9Y547">
    <property type="development level" value="Tbio"/>
</dbReference>
<dbReference type="PRO" id="PR:Q9Y547"/>
<dbReference type="Proteomes" id="UP000005640">
    <property type="component" value="Chromosome 1"/>
</dbReference>
<dbReference type="RNAct" id="Q9Y547">
    <property type="molecule type" value="protein"/>
</dbReference>
<dbReference type="Bgee" id="ENSG00000081870">
    <property type="expression patterns" value="Expressed in oocyte and 211 other cell types or tissues"/>
</dbReference>
<dbReference type="ExpressionAtlas" id="Q9Y547">
    <property type="expression patterns" value="baseline and differential"/>
</dbReference>
<dbReference type="GO" id="GO:0005813">
    <property type="term" value="C:centrosome"/>
    <property type="evidence" value="ECO:0000318"/>
    <property type="project" value="GO_Central"/>
</dbReference>
<dbReference type="GO" id="GO:0097542">
    <property type="term" value="C:ciliary tip"/>
    <property type="evidence" value="ECO:0000304"/>
    <property type="project" value="Reactome"/>
</dbReference>
<dbReference type="GO" id="GO:0005929">
    <property type="term" value="C:cilium"/>
    <property type="evidence" value="ECO:0000318"/>
    <property type="project" value="GO_Central"/>
</dbReference>
<dbReference type="GO" id="GO:0030992">
    <property type="term" value="C:intraciliary transport particle B"/>
    <property type="evidence" value="ECO:0000353"/>
    <property type="project" value="ComplexPortal"/>
</dbReference>
<dbReference type="GO" id="GO:0046872">
    <property type="term" value="F:metal ion binding"/>
    <property type="evidence" value="ECO:0007669"/>
    <property type="project" value="UniProtKB-KW"/>
</dbReference>
<dbReference type="GO" id="GO:0030154">
    <property type="term" value="P:cell differentiation"/>
    <property type="evidence" value="ECO:0007669"/>
    <property type="project" value="UniProtKB-KW"/>
</dbReference>
<dbReference type="GO" id="GO:0060271">
    <property type="term" value="P:cilium assembly"/>
    <property type="evidence" value="ECO:0000303"/>
    <property type="project" value="ComplexPortal"/>
</dbReference>
<dbReference type="GO" id="GO:0007507">
    <property type="term" value="P:heart development"/>
    <property type="evidence" value="ECO:0007669"/>
    <property type="project" value="Ensembl"/>
</dbReference>
<dbReference type="GO" id="GO:0035720">
    <property type="term" value="P:intraciliary anterograde transport"/>
    <property type="evidence" value="ECO:0000303"/>
    <property type="project" value="ComplexPortal"/>
</dbReference>
<dbReference type="GO" id="GO:0001822">
    <property type="term" value="P:kidney development"/>
    <property type="evidence" value="ECO:0000250"/>
    <property type="project" value="UniProtKB"/>
</dbReference>
<dbReference type="GO" id="GO:0070986">
    <property type="term" value="P:left/right axis specification"/>
    <property type="evidence" value="ECO:0007669"/>
    <property type="project" value="Ensembl"/>
</dbReference>
<dbReference type="GO" id="GO:0030324">
    <property type="term" value="P:lung development"/>
    <property type="evidence" value="ECO:0007669"/>
    <property type="project" value="Ensembl"/>
</dbReference>
<dbReference type="GO" id="GO:0015031">
    <property type="term" value="P:protein transport"/>
    <property type="evidence" value="ECO:0007669"/>
    <property type="project" value="UniProtKB-KW"/>
</dbReference>
<dbReference type="GO" id="GO:0001501">
    <property type="term" value="P:skeletal system development"/>
    <property type="evidence" value="ECO:0007669"/>
    <property type="project" value="Ensembl"/>
</dbReference>
<dbReference type="GO" id="GO:0007224">
    <property type="term" value="P:smoothened signaling pathway"/>
    <property type="evidence" value="ECO:0000318"/>
    <property type="project" value="GO_Central"/>
</dbReference>
<dbReference type="GO" id="GO:0007283">
    <property type="term" value="P:spermatogenesis"/>
    <property type="evidence" value="ECO:0000250"/>
    <property type="project" value="UniProtKB"/>
</dbReference>
<dbReference type="FunFam" id="2.60.120.260:FF:000081">
    <property type="entry name" value="Intraflagellar transport protein 25 homolog"/>
    <property type="match status" value="1"/>
</dbReference>
<dbReference type="Gene3D" id="2.60.120.260">
    <property type="entry name" value="Galactose-binding domain-like"/>
    <property type="match status" value="1"/>
</dbReference>
<dbReference type="InterPro" id="IPR000421">
    <property type="entry name" value="FA58C"/>
</dbReference>
<dbReference type="InterPro" id="IPR008979">
    <property type="entry name" value="Galactose-bd-like_sf"/>
</dbReference>
<dbReference type="InterPro" id="IPR033558">
    <property type="entry name" value="IFT25"/>
</dbReference>
<dbReference type="PANTHER" id="PTHR33906">
    <property type="entry name" value="INTRAFLAGELLAR TRANSPORT PROTEIN 25 HOMOLOG"/>
    <property type="match status" value="1"/>
</dbReference>
<dbReference type="PANTHER" id="PTHR33906:SF1">
    <property type="entry name" value="INTRAFLAGELLAR TRANSPORT PROTEIN 25 HOMOLOG"/>
    <property type="match status" value="1"/>
</dbReference>
<dbReference type="Pfam" id="PF00754">
    <property type="entry name" value="F5_F8_type_C"/>
    <property type="match status" value="1"/>
</dbReference>
<dbReference type="SUPFAM" id="SSF49785">
    <property type="entry name" value="Galactose-binding domain-like"/>
    <property type="match status" value="1"/>
</dbReference>
<keyword id="KW-0002">3D-structure</keyword>
<keyword id="KW-0106">Calcium</keyword>
<keyword id="KW-0966">Cell projection</keyword>
<keyword id="KW-0969">Cilium</keyword>
<keyword id="KW-0221">Differentiation</keyword>
<keyword id="KW-0479">Metal-binding</keyword>
<keyword id="KW-0653">Protein transport</keyword>
<keyword id="KW-1267">Proteomics identification</keyword>
<keyword id="KW-1185">Reference proteome</keyword>
<keyword id="KW-0744">Spermatogenesis</keyword>
<keyword id="KW-0346">Stress response</keyword>
<keyword id="KW-0813">Transport</keyword>
<proteinExistence type="evidence at protein level"/>
<gene>
    <name evidence="6" type="primary">IFT25</name>
    <name type="synonym">C1orf41</name>
    <name type="synonym">HSPB11</name>
    <name type="ORF">HSPC034</name>
</gene>
<comment type="function">
    <text evidence="2">Component of the IFT complex B required for sonic hedgehog/SHH signaling. May mediate transport of SHH components: required for the export of SMO and PTCH1 receptors out of the cilium and the accumulation of GLI2 at the ciliary tip in response to activation of the SHH pathway, suggesting it is involved in the dynamic transport of SHH signaling molecules within the cilium. Not required for ciliary assembly. Its role in intraflagellar transport is mainly seen in tissues rich in ciliated cells such as kidney and testis. Essential for male fertility, spermiogenesis and sperm flagella formation. Plays a role in the early development of the kidney. May be involved in the regulation of ureteric bud initiation (By similarity).</text>
</comment>
<comment type="subunit">
    <text evidence="2">Component of the IFT complex B, at least composed of IFT20, IFT22, IFT25, IFT27, IFT46, IFT52, TRAF3IP1/IFT54, IFT57, IFT74, IFT80, IFT81, and IFT88. Interacts with IFT27. Interacts with IFT88 (By similarity).</text>
</comment>
<comment type="interaction">
    <interactant intactId="EBI-747101">
        <id>Q9Y547</id>
    </interactant>
    <interactant intactId="EBI-739467">
        <id>Q9H8Y8</id>
        <label>GORASP2</label>
    </interactant>
    <organismsDiffer>false</organismsDiffer>
    <experiments>3</experiments>
</comment>
<comment type="interaction">
    <interactant intactId="EBI-747101">
        <id>Q9Y547</id>
    </interactant>
    <interactant intactId="EBI-747093">
        <id>Q9BW83</id>
        <label>IFT27</label>
    </interactant>
    <organismsDiffer>false</organismsDiffer>
    <experiments>23</experiments>
</comment>
<comment type="interaction">
    <interactant intactId="EBI-747101">
        <id>Q9Y547</id>
    </interactant>
    <interactant intactId="EBI-1767971">
        <id>Q9Y6Y8</id>
        <label>SEC23IP</label>
    </interactant>
    <organismsDiffer>false</organismsDiffer>
    <experiments>3</experiments>
</comment>
<comment type="interaction">
    <interactant intactId="EBI-747101">
        <id>Q9Y547</id>
    </interactant>
    <interactant intactId="EBI-357631">
        <id>Q13114</id>
        <label>TRAF3</label>
    </interactant>
    <organismsDiffer>false</organismsDiffer>
    <experiments>3</experiments>
</comment>
<comment type="subcellular location">
    <subcellularLocation>
        <location evidence="2">Cell projection</location>
        <location evidence="2">Cilium</location>
    </subcellularLocation>
</comment>
<comment type="tissue specificity">
    <text evidence="3">Detected in placenta.</text>
</comment>
<comment type="similarity">
    <text evidence="4">Belongs to the IFT25 family.</text>
</comment>
<comment type="caution">
    <text evidence="5">Was initially classified as a member of the small heat shock family protein. However, it was later shown that it is not the case (PubMed:19921466).</text>
</comment>
<comment type="sequence caution" evidence="4">
    <conflict type="frameshift">
        <sequence resource="EMBL-CDS" id="AAD43011"/>
    </conflict>
</comment>
<protein>
    <recommendedName>
        <fullName>Intraflagellar transport protein 25 homolog</fullName>
    </recommendedName>
    <alternativeName>
        <fullName>Heat shock protein beta-11</fullName>
        <shortName>Hspb11</shortName>
    </alternativeName>
    <alternativeName>
        <fullName>Heat shock protein family B member 11</fullName>
    </alternativeName>
    <alternativeName>
        <fullName>Placental protein 25</fullName>
        <shortName>PP25</shortName>
    </alternativeName>
</protein>
<organism>
    <name type="scientific">Homo sapiens</name>
    <name type="common">Human</name>
    <dbReference type="NCBI Taxonomy" id="9606"/>
    <lineage>
        <taxon>Eukaryota</taxon>
        <taxon>Metazoa</taxon>
        <taxon>Chordata</taxon>
        <taxon>Craniata</taxon>
        <taxon>Vertebrata</taxon>
        <taxon>Euteleostomi</taxon>
        <taxon>Mammalia</taxon>
        <taxon>Eutheria</taxon>
        <taxon>Euarchontoglires</taxon>
        <taxon>Primates</taxon>
        <taxon>Haplorrhini</taxon>
        <taxon>Catarrhini</taxon>
        <taxon>Hominidae</taxon>
        <taxon>Homo</taxon>
    </lineage>
</organism>
<evidence type="ECO:0000250" key="1"/>
<evidence type="ECO:0000250" key="2">
    <source>
        <dbReference type="UniProtKB" id="Q9D6H2"/>
    </source>
</evidence>
<evidence type="ECO:0000269" key="3">
    <source>
    </source>
</evidence>
<evidence type="ECO:0000305" key="4"/>
<evidence type="ECO:0000305" key="5">
    <source>
    </source>
</evidence>
<evidence type="ECO:0000312" key="6">
    <source>
        <dbReference type="HGNC" id="HGNC:25019"/>
    </source>
</evidence>
<evidence type="ECO:0007829" key="7">
    <source>
        <dbReference type="PDB" id="1TVG"/>
    </source>
</evidence>
<evidence type="ECO:0007829" key="8">
    <source>
        <dbReference type="PDB" id="1XPW"/>
    </source>
</evidence>
<feature type="chain" id="PRO_0000058531" description="Intraflagellar transport protein 25 homolog">
    <location>
        <begin position="1"/>
        <end position="144"/>
    </location>
</feature>
<feature type="binding site" evidence="1">
    <location>
        <position position="29"/>
    </location>
    <ligand>
        <name>Ca(2+)</name>
        <dbReference type="ChEBI" id="CHEBI:29108"/>
    </ligand>
</feature>
<feature type="binding site" evidence="1">
    <location>
        <position position="32"/>
    </location>
    <ligand>
        <name>Ca(2+)</name>
        <dbReference type="ChEBI" id="CHEBI:29108"/>
    </ligand>
</feature>
<feature type="binding site" evidence="1">
    <location>
        <position position="37"/>
    </location>
    <ligand>
        <name>Ca(2+)</name>
        <dbReference type="ChEBI" id="CHEBI:29108"/>
    </ligand>
</feature>
<feature type="helix" evidence="7">
    <location>
        <begin position="9"/>
        <end position="11"/>
    </location>
</feature>
<feature type="strand" evidence="7">
    <location>
        <begin position="14"/>
        <end position="16"/>
    </location>
</feature>
<feature type="strand" evidence="8">
    <location>
        <begin position="23"/>
        <end position="25"/>
    </location>
</feature>
<feature type="helix" evidence="7">
    <location>
        <begin position="27"/>
        <end position="31"/>
    </location>
</feature>
<feature type="strand" evidence="7">
    <location>
        <begin position="45"/>
        <end position="77"/>
    </location>
</feature>
<feature type="strand" evidence="7">
    <location>
        <begin position="79"/>
        <end position="82"/>
    </location>
</feature>
<feature type="strand" evidence="7">
    <location>
        <begin position="86"/>
        <end position="92"/>
    </location>
</feature>
<feature type="strand" evidence="7">
    <location>
        <begin position="101"/>
        <end position="105"/>
    </location>
</feature>
<feature type="strand" evidence="7">
    <location>
        <begin position="110"/>
        <end position="125"/>
    </location>
</feature>
<feature type="strand" evidence="7">
    <location>
        <begin position="128"/>
        <end position="139"/>
    </location>
</feature>
<reference key="1">
    <citation type="submission" date="2001-09" db="EMBL/GenBank/DDBJ databases">
        <title>Isolation and sequence analysis of a cDNA encoding placental protein 25 (PP25).</title>
        <authorList>
            <person name="Bellyei S."/>
            <person name="Than N.G."/>
            <person name="Szigeti A."/>
            <person name="Sumegi B."/>
            <person name="Bohn H."/>
            <person name="Than G.N."/>
        </authorList>
    </citation>
    <scope>NUCLEOTIDE SEQUENCE [MRNA]</scope>
</reference>
<reference key="2">
    <citation type="journal article" date="2000" name="Genome Res.">
        <title>Cloning and functional analysis of cDNAs with open reading frames for 300 previously undefined genes expressed in CD34+ hematopoietic stem/progenitor cells.</title>
        <authorList>
            <person name="Zhang Q.-H."/>
            <person name="Ye M."/>
            <person name="Wu X.-Y."/>
            <person name="Ren S.-X."/>
            <person name="Zhao M."/>
            <person name="Zhao C.-J."/>
            <person name="Fu G."/>
            <person name="Shen Y."/>
            <person name="Fan H.-Y."/>
            <person name="Lu G."/>
            <person name="Zhong M."/>
            <person name="Xu X.-R."/>
            <person name="Han Z.-G."/>
            <person name="Zhang J.-W."/>
            <person name="Tao J."/>
            <person name="Huang Q.-H."/>
            <person name="Zhou J."/>
            <person name="Hu G.-X."/>
            <person name="Gu J."/>
            <person name="Chen S.-J."/>
            <person name="Chen Z."/>
        </authorList>
    </citation>
    <scope>NUCLEOTIDE SEQUENCE [LARGE SCALE MRNA]</scope>
    <source>
        <tissue>Umbilical cord blood</tissue>
    </source>
</reference>
<reference key="3">
    <citation type="journal article" date="2006" name="Nature">
        <title>The DNA sequence and biological annotation of human chromosome 1.</title>
        <authorList>
            <person name="Gregory S.G."/>
            <person name="Barlow K.F."/>
            <person name="McLay K.E."/>
            <person name="Kaul R."/>
            <person name="Swarbreck D."/>
            <person name="Dunham A."/>
            <person name="Scott C.E."/>
            <person name="Howe K.L."/>
            <person name="Woodfine K."/>
            <person name="Spencer C.C.A."/>
            <person name="Jones M.C."/>
            <person name="Gillson C."/>
            <person name="Searle S."/>
            <person name="Zhou Y."/>
            <person name="Kokocinski F."/>
            <person name="McDonald L."/>
            <person name="Evans R."/>
            <person name="Phillips K."/>
            <person name="Atkinson A."/>
            <person name="Cooper R."/>
            <person name="Jones C."/>
            <person name="Hall R.E."/>
            <person name="Andrews T.D."/>
            <person name="Lloyd C."/>
            <person name="Ainscough R."/>
            <person name="Almeida J.P."/>
            <person name="Ambrose K.D."/>
            <person name="Anderson F."/>
            <person name="Andrew R.W."/>
            <person name="Ashwell R.I.S."/>
            <person name="Aubin K."/>
            <person name="Babbage A.K."/>
            <person name="Bagguley C.L."/>
            <person name="Bailey J."/>
            <person name="Beasley H."/>
            <person name="Bethel G."/>
            <person name="Bird C.P."/>
            <person name="Bray-Allen S."/>
            <person name="Brown J.Y."/>
            <person name="Brown A.J."/>
            <person name="Buckley D."/>
            <person name="Burton J."/>
            <person name="Bye J."/>
            <person name="Carder C."/>
            <person name="Chapman J.C."/>
            <person name="Clark S.Y."/>
            <person name="Clarke G."/>
            <person name="Clee C."/>
            <person name="Cobley V."/>
            <person name="Collier R.E."/>
            <person name="Corby N."/>
            <person name="Coville G.J."/>
            <person name="Davies J."/>
            <person name="Deadman R."/>
            <person name="Dunn M."/>
            <person name="Earthrowl M."/>
            <person name="Ellington A.G."/>
            <person name="Errington H."/>
            <person name="Frankish A."/>
            <person name="Frankland J."/>
            <person name="French L."/>
            <person name="Garner P."/>
            <person name="Garnett J."/>
            <person name="Gay L."/>
            <person name="Ghori M.R.J."/>
            <person name="Gibson R."/>
            <person name="Gilby L.M."/>
            <person name="Gillett W."/>
            <person name="Glithero R.J."/>
            <person name="Grafham D.V."/>
            <person name="Griffiths C."/>
            <person name="Griffiths-Jones S."/>
            <person name="Grocock R."/>
            <person name="Hammond S."/>
            <person name="Harrison E.S.I."/>
            <person name="Hart E."/>
            <person name="Haugen E."/>
            <person name="Heath P.D."/>
            <person name="Holmes S."/>
            <person name="Holt K."/>
            <person name="Howden P.J."/>
            <person name="Hunt A.R."/>
            <person name="Hunt S.E."/>
            <person name="Hunter G."/>
            <person name="Isherwood J."/>
            <person name="James R."/>
            <person name="Johnson C."/>
            <person name="Johnson D."/>
            <person name="Joy A."/>
            <person name="Kay M."/>
            <person name="Kershaw J.K."/>
            <person name="Kibukawa M."/>
            <person name="Kimberley A.M."/>
            <person name="King A."/>
            <person name="Knights A.J."/>
            <person name="Lad H."/>
            <person name="Laird G."/>
            <person name="Lawlor S."/>
            <person name="Leongamornlert D.A."/>
            <person name="Lloyd D.M."/>
            <person name="Loveland J."/>
            <person name="Lovell J."/>
            <person name="Lush M.J."/>
            <person name="Lyne R."/>
            <person name="Martin S."/>
            <person name="Mashreghi-Mohammadi M."/>
            <person name="Matthews L."/>
            <person name="Matthews N.S.W."/>
            <person name="McLaren S."/>
            <person name="Milne S."/>
            <person name="Mistry S."/>
            <person name="Moore M.J.F."/>
            <person name="Nickerson T."/>
            <person name="O'Dell C.N."/>
            <person name="Oliver K."/>
            <person name="Palmeiri A."/>
            <person name="Palmer S.A."/>
            <person name="Parker A."/>
            <person name="Patel D."/>
            <person name="Pearce A.V."/>
            <person name="Peck A.I."/>
            <person name="Pelan S."/>
            <person name="Phelps K."/>
            <person name="Phillimore B.J."/>
            <person name="Plumb R."/>
            <person name="Rajan J."/>
            <person name="Raymond C."/>
            <person name="Rouse G."/>
            <person name="Saenphimmachak C."/>
            <person name="Sehra H.K."/>
            <person name="Sheridan E."/>
            <person name="Shownkeen R."/>
            <person name="Sims S."/>
            <person name="Skuce C.D."/>
            <person name="Smith M."/>
            <person name="Steward C."/>
            <person name="Subramanian S."/>
            <person name="Sycamore N."/>
            <person name="Tracey A."/>
            <person name="Tromans A."/>
            <person name="Van Helmond Z."/>
            <person name="Wall M."/>
            <person name="Wallis J.M."/>
            <person name="White S."/>
            <person name="Whitehead S.L."/>
            <person name="Wilkinson J.E."/>
            <person name="Willey D.L."/>
            <person name="Williams H."/>
            <person name="Wilming L."/>
            <person name="Wray P.W."/>
            <person name="Wu Z."/>
            <person name="Coulson A."/>
            <person name="Vaudin M."/>
            <person name="Sulston J.E."/>
            <person name="Durbin R.M."/>
            <person name="Hubbard T."/>
            <person name="Wooster R."/>
            <person name="Dunham I."/>
            <person name="Carter N.P."/>
            <person name="McVean G."/>
            <person name="Ross M.T."/>
            <person name="Harrow J."/>
            <person name="Olson M.V."/>
            <person name="Beck S."/>
            <person name="Rogers J."/>
            <person name="Bentley D.R."/>
        </authorList>
    </citation>
    <scope>NUCLEOTIDE SEQUENCE [LARGE SCALE GENOMIC DNA]</scope>
</reference>
<reference key="4">
    <citation type="submission" date="2005-09" db="EMBL/GenBank/DDBJ databases">
        <authorList>
            <person name="Mural R.J."/>
            <person name="Istrail S."/>
            <person name="Sutton G.G."/>
            <person name="Florea L."/>
            <person name="Halpern A.L."/>
            <person name="Mobarry C.M."/>
            <person name="Lippert R."/>
            <person name="Walenz B."/>
            <person name="Shatkay H."/>
            <person name="Dew I."/>
            <person name="Miller J.R."/>
            <person name="Flanigan M.J."/>
            <person name="Edwards N.J."/>
            <person name="Bolanos R."/>
            <person name="Fasulo D."/>
            <person name="Halldorsson B.V."/>
            <person name="Hannenhalli S."/>
            <person name="Turner R."/>
            <person name="Yooseph S."/>
            <person name="Lu F."/>
            <person name="Nusskern D.R."/>
            <person name="Shue B.C."/>
            <person name="Zheng X.H."/>
            <person name="Zhong F."/>
            <person name="Delcher A.L."/>
            <person name="Huson D.H."/>
            <person name="Kravitz S.A."/>
            <person name="Mouchard L."/>
            <person name="Reinert K."/>
            <person name="Remington K.A."/>
            <person name="Clark A.G."/>
            <person name="Waterman M.S."/>
            <person name="Eichler E.E."/>
            <person name="Adams M.D."/>
            <person name="Hunkapiller M.W."/>
            <person name="Myers E.W."/>
            <person name="Venter J.C."/>
        </authorList>
    </citation>
    <scope>NUCLEOTIDE SEQUENCE [LARGE SCALE GENOMIC DNA]</scope>
</reference>
<reference key="5">
    <citation type="submission" date="2005-07" db="EMBL/GenBank/DDBJ databases">
        <authorList>
            <person name="Mural R.J."/>
            <person name="Istrail S."/>
            <person name="Sutton G.G."/>
            <person name="Florea L."/>
            <person name="Halpern A.L."/>
            <person name="Mobarry C.M."/>
            <person name="Lippert R."/>
            <person name="Walenz B."/>
            <person name="Shatkay H."/>
            <person name="Dew I."/>
            <person name="Miller J.R."/>
            <person name="Flanigan M.J."/>
            <person name="Edwards N.J."/>
            <person name="Bolanos R."/>
            <person name="Fasulo D."/>
            <person name="Halldorsson B.V."/>
            <person name="Hannenhalli S."/>
            <person name="Turner R."/>
            <person name="Yooseph S."/>
            <person name="Lu F."/>
            <person name="Nusskern D.R."/>
            <person name="Shue B.C."/>
            <person name="Zheng X.H."/>
            <person name="Zhong F."/>
            <person name="Delcher A.L."/>
            <person name="Huson D.H."/>
            <person name="Kravitz S.A."/>
            <person name="Mouchard L."/>
            <person name="Reinert K."/>
            <person name="Remington K.A."/>
            <person name="Clark A.G."/>
            <person name="Waterman M.S."/>
            <person name="Eichler E.E."/>
            <person name="Adams M.D."/>
            <person name="Hunkapiller M.W."/>
            <person name="Myers E.W."/>
            <person name="Venter J.C."/>
        </authorList>
    </citation>
    <scope>NUCLEOTIDE SEQUENCE [LARGE SCALE GENOMIC DNA]</scope>
</reference>
<reference key="6">
    <citation type="journal article" date="2004" name="Genome Res.">
        <title>The status, quality, and expansion of the NIH full-length cDNA project: the Mammalian Gene Collection (MGC).</title>
        <authorList>
            <consortium name="The MGC Project Team"/>
        </authorList>
    </citation>
    <scope>NUCLEOTIDE SEQUENCE [LARGE SCALE MRNA]</scope>
    <source>
        <tissue>Bone marrow</tissue>
    </source>
</reference>
<reference key="7">
    <citation type="journal article" date="1991" name="Arch. Gynecol. Obstet.">
        <title>Isolation and characterization of five new soluble placental tissue proteins (PP22, PP23, PP24, PP25, PP26).</title>
        <authorList>
            <person name="Bohn H."/>
            <person name="Winckler W."/>
        </authorList>
    </citation>
    <scope>TISSUE SPECIFICITY</scope>
</reference>
<reference key="8">
    <citation type="journal article" date="2010" name="Cell Stress Chaperones">
        <title>Why proteins without an alpha-crystallin domain should not be included in the human small heat shock protein family HSPB.</title>
        <authorList>
            <person name="Kappe G."/>
            <person name="Boelens W.C."/>
            <person name="de Jong W.W."/>
        </authorList>
    </citation>
    <scope>PHYLOGENETIC ANALYSIS</scope>
</reference>
<reference key="9">
    <citation type="journal article" date="2011" name="BMC Syst. Biol.">
        <title>Initial characterization of the human central proteome.</title>
        <authorList>
            <person name="Burkard T.R."/>
            <person name="Planyavsky M."/>
            <person name="Kaupe I."/>
            <person name="Breitwieser F.P."/>
            <person name="Buerckstuemmer T."/>
            <person name="Bennett K.L."/>
            <person name="Superti-Furga G."/>
            <person name="Colinge J."/>
        </authorList>
    </citation>
    <scope>IDENTIFICATION BY MASS SPECTROMETRY [LARGE SCALE ANALYSIS]</scope>
</reference>
<reference key="10">
    <citation type="journal article" date="2009" name="Proteins">
        <title>Improving NMR protein structure quality by Rosetta refinement: a molecular replacement study.</title>
        <authorList>
            <person name="Ramelot T.A."/>
            <person name="Raman S."/>
            <person name="Kuzin A.P."/>
            <person name="Xiao R."/>
            <person name="Ma L.-C."/>
            <person name="Acton T.B."/>
            <person name="Hunt J.F."/>
            <person name="Montelione G.T."/>
            <person name="Baker D."/>
            <person name="Kennedy M.A."/>
        </authorList>
    </citation>
    <scope>STRUCTURE BY NMR OF 1-144</scope>
    <scope>X-RAY CRYSTALLOGRAPHY (1.6 ANGSTROMS) OF 1-144</scope>
</reference>
<sequence length="144" mass="16297">MRKIDLCLSSEGSEVILATSSDEKHPPENIIDGNPETFWTTTGMFPQEFIICFHKHVRIERLVIQSYFVQTLKIEKSTSKEPVDFEQWIEKDLVHTEGQLQNEEIVAHDGSATYLRFIIVSAFDHFASVHSVSAEGTVVSNLSS</sequence>